<gene>
    <name type="primary">HMCN1</name>
    <name type="synonym">FIBL6</name>
</gene>
<protein>
    <recommendedName>
        <fullName>Hemicentin-1</fullName>
    </recommendedName>
    <alternativeName>
        <fullName>Fibulin-6</fullName>
        <shortName>FIBL-6</shortName>
    </alternativeName>
</protein>
<keyword id="KW-0913">Age-related macular degeneration</keyword>
<keyword id="KW-0025">Alternative splicing</keyword>
<keyword id="KW-0084">Basement membrane</keyword>
<keyword id="KW-0106">Calcium</keyword>
<keyword id="KW-0131">Cell cycle</keyword>
<keyword id="KW-0132">Cell division</keyword>
<keyword id="KW-0965">Cell junction</keyword>
<keyword id="KW-0963">Cytoplasm</keyword>
<keyword id="KW-0225">Disease variant</keyword>
<keyword id="KW-1015">Disulfide bond</keyword>
<keyword id="KW-0245">EGF-like domain</keyword>
<keyword id="KW-0272">Extracellular matrix</keyword>
<keyword id="KW-0325">Glycoprotein</keyword>
<keyword id="KW-0393">Immunoglobulin domain</keyword>
<keyword id="KW-1267">Proteomics identification</keyword>
<keyword id="KW-1185">Reference proteome</keyword>
<keyword id="KW-0677">Repeat</keyword>
<keyword id="KW-0964">Secreted</keyword>
<keyword id="KW-0716">Sensory transduction</keyword>
<keyword id="KW-0732">Signal</keyword>
<keyword id="KW-0844">Vision</keyword>
<proteinExistence type="evidence at protein level"/>
<accession>Q96RW7</accession>
<accession>A6NGE3</accession>
<accession>Q5TYR7</accession>
<accession>Q96DN3</accession>
<accession>Q96DN8</accession>
<accession>Q96SC3</accession>
<feature type="signal peptide" evidence="3">
    <location>
        <begin position="1"/>
        <end position="21"/>
    </location>
</feature>
<feature type="chain" id="PRO_0000045391" description="Hemicentin-1">
    <location>
        <begin position="22"/>
        <end position="5635"/>
    </location>
</feature>
<feature type="domain" description="VWFA">
    <location>
        <begin position="41"/>
        <end position="216"/>
    </location>
</feature>
<feature type="domain" description="Ig-like C2-type 1">
    <location>
        <begin position="431"/>
        <end position="517"/>
    </location>
</feature>
<feature type="domain" description="Ig-like C2-type 2">
    <location>
        <begin position="520"/>
        <end position="607"/>
    </location>
</feature>
<feature type="domain" description="Ig-like C2-type 3">
    <location>
        <begin position="612"/>
        <end position="697"/>
    </location>
</feature>
<feature type="domain" description="Ig-like C2-type 4">
    <location>
        <begin position="702"/>
        <end position="788"/>
    </location>
</feature>
<feature type="domain" description="Ig-like C2-type 5">
    <location>
        <begin position="793"/>
        <end position="883"/>
    </location>
</feature>
<feature type="domain" description="Ig-like C2-type 6">
    <location>
        <begin position="890"/>
        <end position="976"/>
    </location>
</feature>
<feature type="domain" description="Ig-like C2-type 7">
    <location>
        <begin position="981"/>
        <end position="1067"/>
    </location>
</feature>
<feature type="domain" description="Ig-like C2-type 8">
    <location>
        <begin position="1072"/>
        <end position="1166"/>
    </location>
</feature>
<feature type="domain" description="Ig-like C2-type 9">
    <location>
        <begin position="1171"/>
        <end position="1255"/>
    </location>
</feature>
<feature type="domain" description="Ig-like C2-type 10">
    <location>
        <begin position="1262"/>
        <end position="1354"/>
    </location>
</feature>
<feature type="domain" description="Ig-like C2-type 11">
    <location>
        <begin position="1358"/>
        <end position="1447"/>
    </location>
</feature>
<feature type="domain" description="Ig-like C2-type 12">
    <location>
        <begin position="1452"/>
        <end position="1541"/>
    </location>
</feature>
<feature type="domain" description="Ig-like C2-type 13">
    <location>
        <begin position="1546"/>
        <end position="1634"/>
    </location>
</feature>
<feature type="domain" description="Ig-like C2-type 14">
    <location>
        <begin position="1638"/>
        <end position="1724"/>
    </location>
</feature>
<feature type="domain" description="Ig-like C2-type 15">
    <location>
        <begin position="1733"/>
        <end position="1821"/>
    </location>
</feature>
<feature type="domain" description="Ig-like C2-type 16">
    <location>
        <begin position="1826"/>
        <end position="1914"/>
    </location>
</feature>
<feature type="domain" description="Ig-like C2-type 17">
    <location>
        <begin position="1919"/>
        <end position="2007"/>
    </location>
</feature>
<feature type="domain" description="Ig-like C2-type 18">
    <location>
        <begin position="2012"/>
        <end position="2097"/>
    </location>
</feature>
<feature type="domain" description="Ig-like C2-type 19">
    <location>
        <begin position="2104"/>
        <end position="2190"/>
    </location>
</feature>
<feature type="domain" description="Ig-like C2-type 20">
    <location>
        <begin position="2195"/>
        <end position="2285"/>
    </location>
</feature>
<feature type="domain" description="Ig-like C2-type 21">
    <location>
        <begin position="2290"/>
        <end position="2379"/>
    </location>
</feature>
<feature type="domain" description="Ig-like C2-type 22">
    <location>
        <begin position="2384"/>
        <end position="2470"/>
    </location>
</feature>
<feature type="domain" description="Ig-like C2-type 23">
    <location>
        <begin position="2478"/>
        <end position="2564"/>
    </location>
</feature>
<feature type="domain" description="Ig-like C2-type 24">
    <location>
        <begin position="2571"/>
        <end position="2662"/>
    </location>
</feature>
<feature type="domain" description="Ig-like C2-type 25">
    <location>
        <begin position="2666"/>
        <end position="2763"/>
    </location>
</feature>
<feature type="domain" description="Ig-like C2-type 26">
    <location>
        <begin position="2766"/>
        <end position="2864"/>
    </location>
</feature>
<feature type="domain" description="Ig-like C2-type 27">
    <location>
        <begin position="2868"/>
        <end position="2959"/>
    </location>
</feature>
<feature type="domain" description="Ig-like C2-type 28">
    <location>
        <begin position="2964"/>
        <end position="3051"/>
    </location>
</feature>
<feature type="domain" description="Ig-like C2-type 29">
    <location>
        <begin position="3056"/>
        <end position="3146"/>
    </location>
</feature>
<feature type="domain" description="Ig-like C2-type 30">
    <location>
        <begin position="3151"/>
        <end position="3240"/>
    </location>
</feature>
<feature type="domain" description="Ig-like C2-type 31">
    <location>
        <begin position="3245"/>
        <end position="3335"/>
    </location>
</feature>
<feature type="domain" description="Ig-like C2-type 32">
    <location>
        <begin position="3340"/>
        <end position="3429"/>
    </location>
</feature>
<feature type="domain" description="Ig-like C2-type 33">
    <location>
        <begin position="3434"/>
        <end position="3516"/>
    </location>
</feature>
<feature type="domain" description="Ig-like C2-type 34">
    <location>
        <begin position="3527"/>
        <end position="3615"/>
    </location>
</feature>
<feature type="domain" description="Ig-like C2-type 35">
    <location>
        <begin position="3620"/>
        <end position="3708"/>
    </location>
</feature>
<feature type="domain" description="Ig-like C2-type 36">
    <location>
        <begin position="3713"/>
        <end position="3797"/>
    </location>
</feature>
<feature type="domain" description="Ig-like C2-type 37">
    <location>
        <begin position="3804"/>
        <end position="3892"/>
    </location>
</feature>
<feature type="domain" description="Ig-like C2-type 38">
    <location>
        <begin position="3897"/>
        <end position="3983"/>
    </location>
</feature>
<feature type="domain" description="Ig-like C2-type 39">
    <location>
        <begin position="3988"/>
        <end position="4076"/>
    </location>
</feature>
<feature type="domain" description="Ig-like C2-type 40">
    <location>
        <begin position="4079"/>
        <end position="4164"/>
    </location>
</feature>
<feature type="domain" description="Ig-like C2-type 41">
    <location>
        <begin position="4169"/>
        <end position="4255"/>
    </location>
</feature>
<feature type="domain" description="Ig-like C2-type 42">
    <location>
        <begin position="4260"/>
        <end position="4344"/>
    </location>
</feature>
<feature type="domain" description="Ig-like C2-type 43">
    <location>
        <begin position="4348"/>
        <end position="4435"/>
    </location>
</feature>
<feature type="domain" description="Ig-like C2-type 44">
    <location>
        <begin position="4440"/>
        <end position="4527"/>
    </location>
</feature>
<feature type="domain" description="TSP type-1 1" evidence="5">
    <location>
        <begin position="4529"/>
        <end position="4584"/>
    </location>
</feature>
<feature type="domain" description="TSP type-1 2" evidence="5">
    <location>
        <begin position="4586"/>
        <end position="4641"/>
    </location>
</feature>
<feature type="domain" description="TSP type-1 3" evidence="5">
    <location>
        <begin position="4643"/>
        <end position="4698"/>
    </location>
</feature>
<feature type="domain" description="TSP type-1 4" evidence="5">
    <location>
        <begin position="4700"/>
        <end position="4755"/>
    </location>
</feature>
<feature type="domain" description="TSP type-1 5" evidence="5">
    <location>
        <begin position="4757"/>
        <end position="4812"/>
    </location>
</feature>
<feature type="domain" description="TSP type-1 6" evidence="5">
    <location>
        <begin position="4814"/>
        <end position="4869"/>
    </location>
</feature>
<feature type="domain" description="Nidogen G2 beta-barrel" evidence="6">
    <location>
        <begin position="4871"/>
        <end position="5093"/>
    </location>
</feature>
<feature type="domain" description="EGF-like 1; calcium-binding" evidence="4">
    <location>
        <begin position="5107"/>
        <end position="5146"/>
    </location>
</feature>
<feature type="domain" description="EGF-like 2; calcium-binding" evidence="4">
    <location>
        <begin position="5147"/>
        <end position="5191"/>
    </location>
</feature>
<feature type="domain" description="EGF-like 3; calcium-binding" evidence="4">
    <location>
        <begin position="5192"/>
        <end position="5229"/>
    </location>
</feature>
<feature type="domain" description="EGF-like 4; calcium-binding" evidence="4">
    <location>
        <begin position="5230"/>
        <end position="5271"/>
    </location>
</feature>
<feature type="domain" description="EGF-like 5; calcium-binding" evidence="4">
    <location>
        <begin position="5272"/>
        <end position="5307"/>
    </location>
</feature>
<feature type="domain" description="EGF-like 6; calcium-binding" evidence="4">
    <location>
        <begin position="5315"/>
        <end position="5355"/>
    </location>
</feature>
<feature type="domain" description="EGF-like 7; calcium-binding" evidence="4">
    <location>
        <begin position="5432"/>
        <end position="5471"/>
    </location>
</feature>
<feature type="glycosylation site" description="N-linked (GlcNAc...) asparagine" evidence="3">
    <location>
        <position position="349"/>
    </location>
</feature>
<feature type="glycosylation site" description="N-linked (GlcNAc...) asparagine" evidence="3">
    <location>
        <position position="390"/>
    </location>
</feature>
<feature type="glycosylation site" description="N-linked (GlcNAc...) asparagine" evidence="3">
    <location>
        <position position="528"/>
    </location>
</feature>
<feature type="glycosylation site" description="N-linked (GlcNAc...) asparagine" evidence="3">
    <location>
        <position position="550"/>
    </location>
</feature>
<feature type="glycosylation site" description="N-linked (GlcNAc...) asparagine" evidence="3">
    <location>
        <position position="573"/>
    </location>
</feature>
<feature type="glycosylation site" description="N-linked (GlcNAc...) asparagine" evidence="3">
    <location>
        <position position="620"/>
    </location>
</feature>
<feature type="glycosylation site" description="N-linked (GlcNAc...) asparagine" evidence="3">
    <location>
        <position position="693"/>
    </location>
</feature>
<feature type="glycosylation site" description="N-linked (GlcNAc...) asparagine" evidence="3">
    <location>
        <position position="809"/>
    </location>
</feature>
<feature type="glycosylation site" description="N-linked (GlcNAc...) asparagine" evidence="3">
    <location>
        <position position="970"/>
    </location>
</feature>
<feature type="glycosylation site" description="N-linked (GlcNAc...) asparagine" evidence="3">
    <location>
        <position position="1158"/>
    </location>
</feature>
<feature type="glycosylation site" description="N-linked (GlcNAc...) asparagine" evidence="3">
    <location>
        <position position="1272"/>
    </location>
</feature>
<feature type="glycosylation site" description="N-linked (GlcNAc...) asparagine" evidence="3">
    <location>
        <position position="1369"/>
    </location>
</feature>
<feature type="glycosylation site" description="N-linked (GlcNAc...) asparagine" evidence="3">
    <location>
        <position position="1552"/>
    </location>
</feature>
<feature type="glycosylation site" description="N-linked (GlcNAc...) asparagine" evidence="3">
    <location>
        <position position="1929"/>
    </location>
</feature>
<feature type="glycosylation site" description="N-linked (GlcNAc...) asparagine" evidence="3">
    <location>
        <position position="2112"/>
    </location>
</feature>
<feature type="glycosylation site" description="N-linked (GlcNAc...) asparagine" evidence="3">
    <location>
        <position position="2155"/>
    </location>
</feature>
<feature type="glycosylation site" description="N-linked (GlcNAc...) asparagine" evidence="3">
    <location>
        <position position="2395"/>
    </location>
</feature>
<feature type="glycosylation site" description="N-linked (GlcNAc...) asparagine" evidence="3">
    <location>
        <position position="2689"/>
    </location>
</feature>
<feature type="glycosylation site" description="N-linked (GlcNAc...) asparagine" evidence="3">
    <location>
        <position position="2887"/>
    </location>
</feature>
<feature type="glycosylation site" description="N-linked (GlcNAc...) asparagine" evidence="3">
    <location>
        <position position="2973"/>
    </location>
</feature>
<feature type="glycosylation site" description="N-linked (GlcNAc...) asparagine" evidence="3">
    <location>
        <position position="3221"/>
    </location>
</feature>
<feature type="glycosylation site" description="N-linked (GlcNAc...) asparagine" evidence="3">
    <location>
        <position position="3300"/>
    </location>
</feature>
<feature type="glycosylation site" description="N-linked (GlcNAc...) asparagine" evidence="3">
    <location>
        <position position="3530"/>
    </location>
</feature>
<feature type="glycosylation site" description="N-linked (GlcNAc...) asparagine" evidence="3">
    <location>
        <position position="3689"/>
    </location>
</feature>
<feature type="glycosylation site" description="N-linked (GlcNAc...) asparagine" evidence="3">
    <location>
        <position position="3727"/>
    </location>
</feature>
<feature type="glycosylation site" description="N-linked (GlcNAc...) asparagine" evidence="3">
    <location>
        <position position="3812"/>
    </location>
</feature>
<feature type="glycosylation site" description="N-linked (GlcNAc...) asparagine" evidence="3">
    <location>
        <position position="4029"/>
    </location>
</feature>
<feature type="glycosylation site" description="N-linked (GlcNAc...) asparagine" evidence="3">
    <location>
        <position position="4401"/>
    </location>
</feature>
<feature type="glycosylation site" description="N-linked (GlcNAc...) asparagine" evidence="3">
    <location>
        <position position="4491"/>
    </location>
</feature>
<feature type="glycosylation site" description="N-linked (GlcNAc...) asparagine" evidence="3">
    <location>
        <position position="4606"/>
    </location>
</feature>
<feature type="glycosylation site" description="N-linked (GlcNAc...) asparagine" evidence="3">
    <location>
        <position position="4894"/>
    </location>
</feature>
<feature type="glycosylation site" description="N-linked (GlcNAc...) asparagine" evidence="3">
    <location>
        <position position="5040"/>
    </location>
</feature>
<feature type="glycosylation site" description="N-linked (GlcNAc...) asparagine" evidence="3">
    <location>
        <position position="5267"/>
    </location>
</feature>
<feature type="glycosylation site" description="N-linked (GlcNAc...) asparagine" evidence="3">
    <location>
        <position position="5615"/>
    </location>
</feature>
<feature type="disulfide bond" evidence="1">
    <location>
        <begin position="451"/>
        <end position="499"/>
    </location>
</feature>
<feature type="disulfide bond" evidence="1">
    <location>
        <begin position="541"/>
        <end position="591"/>
    </location>
</feature>
<feature type="disulfide bond" evidence="1">
    <location>
        <begin position="633"/>
        <end position="681"/>
    </location>
</feature>
<feature type="disulfide bond" evidence="1">
    <location>
        <begin position="723"/>
        <end position="772"/>
    </location>
</feature>
<feature type="disulfide bond" evidence="1">
    <location>
        <begin position="814"/>
        <end position="867"/>
    </location>
</feature>
<feature type="disulfide bond" evidence="1">
    <location>
        <begin position="911"/>
        <end position="960"/>
    </location>
</feature>
<feature type="disulfide bond" evidence="1">
    <location>
        <begin position="1002"/>
        <end position="1051"/>
    </location>
</feature>
<feature type="disulfide bond" evidence="1">
    <location>
        <begin position="1101"/>
        <end position="1150"/>
    </location>
</feature>
<feature type="disulfide bond" evidence="1">
    <location>
        <begin position="1192"/>
        <end position="1241"/>
    </location>
</feature>
<feature type="disulfide bond" evidence="1">
    <location>
        <begin position="1288"/>
        <end position="1338"/>
    </location>
</feature>
<feature type="disulfide bond" evidence="1">
    <location>
        <begin position="1382"/>
        <end position="1431"/>
    </location>
</feature>
<feature type="disulfide bond" evidence="1">
    <location>
        <begin position="1475"/>
        <end position="1525"/>
    </location>
</feature>
<feature type="disulfide bond" evidence="1">
    <location>
        <begin position="1569"/>
        <end position="1618"/>
    </location>
</feature>
<feature type="disulfide bond" evidence="1">
    <location>
        <begin position="1663"/>
        <end position="1712"/>
    </location>
</feature>
<feature type="disulfide bond" evidence="1">
    <location>
        <begin position="1756"/>
        <end position="1805"/>
    </location>
</feature>
<feature type="disulfide bond" evidence="1">
    <location>
        <begin position="1848"/>
        <end position="1898"/>
    </location>
</feature>
<feature type="disulfide bond" evidence="1">
    <location>
        <begin position="1942"/>
        <end position="1991"/>
    </location>
</feature>
<feature type="disulfide bond" evidence="1">
    <location>
        <begin position="2033"/>
        <end position="2083"/>
    </location>
</feature>
<feature type="disulfide bond" evidence="1">
    <location>
        <begin position="2125"/>
        <end position="2174"/>
    </location>
</feature>
<feature type="disulfide bond" evidence="1">
    <location>
        <begin position="2218"/>
        <end position="2269"/>
    </location>
</feature>
<feature type="disulfide bond" evidence="1">
    <location>
        <begin position="2314"/>
        <end position="2363"/>
    </location>
</feature>
<feature type="disulfide bond" evidence="1">
    <location>
        <begin position="2408"/>
        <end position="2457"/>
    </location>
</feature>
<feature type="disulfide bond" evidence="1">
    <location>
        <begin position="2501"/>
        <end position="2550"/>
    </location>
</feature>
<feature type="disulfide bond" evidence="1">
    <location>
        <begin position="2597"/>
        <end position="2646"/>
    </location>
</feature>
<feature type="disulfide bond" evidence="1">
    <location>
        <begin position="2696"/>
        <end position="2745"/>
    </location>
</feature>
<feature type="disulfide bond" evidence="1">
    <location>
        <begin position="2799"/>
        <end position="2848"/>
    </location>
</feature>
<feature type="disulfide bond" evidence="1">
    <location>
        <begin position="2894"/>
        <end position="2943"/>
    </location>
</feature>
<feature type="disulfide bond" evidence="1">
    <location>
        <begin position="2986"/>
        <end position="3035"/>
    </location>
</feature>
<feature type="disulfide bond" evidence="1">
    <location>
        <begin position="3081"/>
        <end position="3130"/>
    </location>
</feature>
<feature type="disulfide bond" evidence="1">
    <location>
        <begin position="3173"/>
        <end position="3224"/>
    </location>
</feature>
<feature type="disulfide bond" evidence="1">
    <location>
        <begin position="3268"/>
        <end position="3319"/>
    </location>
</feature>
<feature type="disulfide bond" evidence="1">
    <location>
        <begin position="3364"/>
        <end position="3413"/>
    </location>
</feature>
<feature type="disulfide bond" evidence="1">
    <location>
        <begin position="3457"/>
        <end position="3506"/>
    </location>
</feature>
<feature type="disulfide bond" evidence="1">
    <location>
        <begin position="3550"/>
        <end position="3599"/>
    </location>
</feature>
<feature type="disulfide bond" evidence="1">
    <location>
        <begin position="3643"/>
        <end position="3692"/>
    </location>
</feature>
<feature type="disulfide bond" evidence="1">
    <location>
        <begin position="3734"/>
        <end position="3783"/>
    </location>
</feature>
<feature type="disulfide bond" evidence="1">
    <location>
        <begin position="3825"/>
        <end position="3876"/>
    </location>
</feature>
<feature type="disulfide bond" evidence="1">
    <location>
        <begin position="3918"/>
        <end position="3967"/>
    </location>
</feature>
<feature type="disulfide bond" evidence="1">
    <location>
        <begin position="4009"/>
        <end position="4058"/>
    </location>
</feature>
<feature type="disulfide bond" evidence="1">
    <location>
        <begin position="4100"/>
        <end position="4148"/>
    </location>
</feature>
<feature type="disulfide bond" evidence="1">
    <location>
        <begin position="4190"/>
        <end position="4239"/>
    </location>
</feature>
<feature type="disulfide bond" evidence="1">
    <location>
        <begin position="4281"/>
        <end position="4328"/>
    </location>
</feature>
<feature type="disulfide bond" evidence="1">
    <location>
        <begin position="4371"/>
        <end position="4419"/>
    </location>
</feature>
<feature type="disulfide bond" evidence="1">
    <location>
        <begin position="4461"/>
        <end position="4509"/>
    </location>
</feature>
<feature type="disulfide bond" evidence="1">
    <location>
        <begin position="4541"/>
        <end position="4578"/>
    </location>
</feature>
<feature type="disulfide bond" evidence="1">
    <location>
        <begin position="4545"/>
        <end position="4583"/>
    </location>
</feature>
<feature type="disulfide bond" evidence="1">
    <location>
        <begin position="4556"/>
        <end position="4568"/>
    </location>
</feature>
<feature type="disulfide bond" evidence="1">
    <location>
        <begin position="4598"/>
        <end position="4635"/>
    </location>
</feature>
<feature type="disulfide bond" evidence="1">
    <location>
        <begin position="4602"/>
        <end position="4640"/>
    </location>
</feature>
<feature type="disulfide bond" evidence="1">
    <location>
        <begin position="4613"/>
        <end position="4625"/>
    </location>
</feature>
<feature type="disulfide bond" evidence="1">
    <location>
        <begin position="4655"/>
        <end position="4692"/>
    </location>
</feature>
<feature type="disulfide bond" evidence="1">
    <location>
        <begin position="4659"/>
        <end position="4697"/>
    </location>
</feature>
<feature type="disulfide bond" evidence="1">
    <location>
        <begin position="4670"/>
        <end position="4682"/>
    </location>
</feature>
<feature type="disulfide bond" evidence="1">
    <location>
        <begin position="4712"/>
        <end position="4749"/>
    </location>
</feature>
<feature type="disulfide bond" evidence="1">
    <location>
        <begin position="4716"/>
        <end position="4754"/>
    </location>
</feature>
<feature type="disulfide bond" evidence="1">
    <location>
        <begin position="4727"/>
        <end position="4739"/>
    </location>
</feature>
<feature type="disulfide bond" evidence="1">
    <location>
        <begin position="4769"/>
        <end position="4806"/>
    </location>
</feature>
<feature type="disulfide bond" evidence="1">
    <location>
        <begin position="4773"/>
        <end position="4811"/>
    </location>
</feature>
<feature type="disulfide bond" evidence="1">
    <location>
        <begin position="4784"/>
        <end position="4796"/>
    </location>
</feature>
<feature type="disulfide bond" evidence="1">
    <location>
        <begin position="4826"/>
        <end position="4863"/>
    </location>
</feature>
<feature type="disulfide bond" evidence="1">
    <location>
        <begin position="4830"/>
        <end position="4868"/>
    </location>
</feature>
<feature type="disulfide bond" evidence="1">
    <location>
        <begin position="4841"/>
        <end position="4853"/>
    </location>
</feature>
<feature type="disulfide bond" evidence="1">
    <location>
        <begin position="5111"/>
        <end position="5121"/>
    </location>
</feature>
<feature type="disulfide bond" evidence="1">
    <location>
        <begin position="5117"/>
        <end position="5130"/>
    </location>
</feature>
<feature type="disulfide bond" evidence="1">
    <location>
        <begin position="5132"/>
        <end position="5145"/>
    </location>
</feature>
<feature type="disulfide bond" evidence="1">
    <location>
        <begin position="5196"/>
        <end position="5206"/>
    </location>
</feature>
<feature type="disulfide bond" evidence="1">
    <location>
        <begin position="5202"/>
        <end position="5215"/>
    </location>
</feature>
<feature type="disulfide bond" evidence="1">
    <location>
        <begin position="5217"/>
        <end position="5228"/>
    </location>
</feature>
<feature type="disulfide bond" evidence="1">
    <location>
        <begin position="5276"/>
        <end position="5289"/>
    </location>
</feature>
<feature type="disulfide bond" evidence="1">
    <location>
        <begin position="5283"/>
        <end position="5298"/>
    </location>
</feature>
<feature type="disulfide bond" evidence="1">
    <location>
        <begin position="5319"/>
        <end position="5330"/>
    </location>
</feature>
<feature type="disulfide bond" evidence="1">
    <location>
        <begin position="5326"/>
        <end position="5339"/>
    </location>
</feature>
<feature type="disulfide bond" evidence="1">
    <location>
        <begin position="5341"/>
        <end position="5354"/>
    </location>
</feature>
<feature type="disulfide bond" evidence="1">
    <location>
        <begin position="5436"/>
        <end position="5446"/>
    </location>
</feature>
<feature type="disulfide bond" evidence="1">
    <location>
        <begin position="5442"/>
        <end position="5455"/>
    </location>
</feature>
<feature type="disulfide bond" evidence="1">
    <location>
        <begin position="5457"/>
        <end position="5470"/>
    </location>
</feature>
<feature type="splice variant" id="VSP_016871" description="In isoform 3." evidence="11">
    <location>
        <begin position="1"/>
        <end position="616"/>
    </location>
</feature>
<feature type="splice variant" id="VSP_016872" description="In isoform 3." evidence="11">
    <original>VPP</original>
    <variation>GES</variation>
    <location>
        <begin position="1169"/>
        <end position="1171"/>
    </location>
</feature>
<feature type="splice variant" id="VSP_016873" description="In isoform 3." evidence="11">
    <location>
        <begin position="1172"/>
        <end position="5635"/>
    </location>
</feature>
<feature type="splice variant" id="VSP_016874" description="In isoform 2." evidence="12">
    <location>
        <begin position="5315"/>
        <end position="5431"/>
    </location>
</feature>
<feature type="sequence variant" id="VAR_049875" description="In dbSNP:rs7539719.">
    <original>T</original>
    <variation>A</variation>
    <location>
        <position position="1056"/>
    </location>
</feature>
<feature type="sequence variant" id="VAR_049876" description="In dbSNP:rs12239296.">
    <original>V</original>
    <variation>F</variation>
    <location>
        <position position="1184"/>
    </location>
</feature>
<feature type="sequence variant" id="VAR_024811" description="In dbSNP:rs1400999751." evidence="7">
    <original>A</original>
    <variation>V</variation>
    <location>
        <position position="1624"/>
    </location>
</feature>
<feature type="sequence variant" id="VAR_024812" description="In dbSNP:rs12067376." evidence="7">
    <original>M</original>
    <variation>I</variation>
    <location>
        <position position="2327"/>
    </location>
</feature>
<feature type="sequence variant" id="VAR_024813" description="In dbSNP:rs12129650." evidence="7 10">
    <original>I</original>
    <variation>T</variation>
    <location>
        <position position="2418"/>
    </location>
</feature>
<feature type="sequence variant" id="VAR_024814" description="In dbSNP:rs10798035." evidence="7">
    <original>E</original>
    <variation>G</variation>
    <location>
        <position position="2893"/>
    </location>
</feature>
<feature type="sequence variant" id="VAR_024815" description="In dbSNP:rs41317489." evidence="7">
    <original>H</original>
    <variation>Y</variation>
    <location>
        <position position="4084"/>
    </location>
</feature>
<feature type="sequence variant" id="VAR_049877" description="In dbSNP:rs10911825.">
    <original>Q</original>
    <variation>R</variation>
    <location>
        <position position="4437"/>
    </location>
</feature>
<feature type="sequence variant" id="VAR_024816" description="In dbSNP:rs6693069." evidence="7">
    <original>A</original>
    <variation>T</variation>
    <location>
        <position position="4720"/>
    </location>
</feature>
<feature type="sequence variant" id="VAR_024817" description="In dbSNP:rs41317507." evidence="7">
    <original>D</original>
    <variation>V</variation>
    <location>
        <position position="5087"/>
    </location>
</feature>
<feature type="sequence variant" id="VAR_024818" description="In ARMD1; dbSNP:rs121434382." evidence="7">
    <original>Q</original>
    <variation>R</variation>
    <location>
        <position position="5345"/>
    </location>
</feature>
<feature type="sequence conflict" description="In Ref. 1." evidence="12" ref="1">
    <original>I</original>
    <variation>F</variation>
    <location>
        <position position="35"/>
    </location>
</feature>
<feature type="sequence conflict" description="In Ref. 1." evidence="12" ref="1">
    <original>N</original>
    <variation>S</variation>
    <location>
        <position position="483"/>
    </location>
</feature>
<feature type="sequence conflict" description="In Ref. 1." evidence="12" ref="1">
    <original>G</original>
    <variation>E</variation>
    <location>
        <position position="1042"/>
    </location>
</feature>
<feature type="sequence conflict" description="In Ref. 1." evidence="12" ref="1">
    <original>Q</original>
    <variation>L</variation>
    <location>
        <position position="1078"/>
    </location>
</feature>
<feature type="sequence conflict" description="In Ref. 2; BAB71216." evidence="12" ref="2">
    <original>T</original>
    <variation>I</variation>
    <location>
        <position position="1153"/>
    </location>
</feature>
<feature type="sequence conflict" description="In Ref. 1." evidence="12" ref="1">
    <original>D</original>
    <variation>E</variation>
    <location>
        <position position="1319"/>
    </location>
</feature>
<feature type="sequence conflict" description="In Ref. 1." evidence="12" ref="1">
    <original>T</original>
    <variation>S</variation>
    <location>
        <position position="1368"/>
    </location>
</feature>
<feature type="sequence conflict" description="In Ref. 2; BAB71216." evidence="12" ref="2">
    <original>K</original>
    <variation>R</variation>
    <location>
        <position position="1414"/>
    </location>
</feature>
<feature type="sequence conflict" description="In Ref. 1." evidence="12" ref="1">
    <original>N</original>
    <variation>K</variation>
    <location>
        <position position="1461"/>
    </location>
</feature>
<feature type="sequence conflict" description="In Ref. 1." evidence="12" ref="1">
    <original>E</original>
    <variation>K</variation>
    <location>
        <position position="1570"/>
    </location>
</feature>
<feature type="sequence conflict" description="In Ref. 1." evidence="12" ref="1">
    <original>K</original>
    <variation>N</variation>
    <location>
        <position position="1664"/>
    </location>
</feature>
<feature type="sequence conflict" description="In Ref. 1." evidence="12" ref="1">
    <original>I</original>
    <variation>F</variation>
    <location>
        <position position="1688"/>
    </location>
</feature>
<feature type="sequence conflict" description="In Ref. 2; BAB71216." evidence="12" ref="2">
    <original>I</original>
    <variation>V</variation>
    <location>
        <position position="1775"/>
    </location>
</feature>
<feature type="sequence conflict" description="In Ref. 2; BAB71216." evidence="12" ref="2">
    <original>K</original>
    <variation>E</variation>
    <location>
        <position position="1816"/>
    </location>
</feature>
<feature type="sequence conflict" description="In Ref. 1." evidence="12" ref="1">
    <original>R</original>
    <variation>C</variation>
    <location>
        <position position="1959"/>
    </location>
</feature>
<feature type="sequence conflict" description="In Ref. 1." evidence="12" ref="1">
    <original>A</original>
    <variation>T</variation>
    <location>
        <position position="2073"/>
    </location>
</feature>
<feature type="sequence conflict" description="In Ref. 1." evidence="12" ref="1">
    <original>E</original>
    <variation>EK</variation>
    <location>
        <position position="2184"/>
    </location>
</feature>
<feature type="sequence conflict" description="In Ref. 1." evidence="12" ref="1">
    <original>K</original>
    <variation>E</variation>
    <location>
        <position position="2872"/>
    </location>
</feature>
<feature type="sequence conflict" description="In Ref. 1." evidence="12" ref="1">
    <original>H</original>
    <variation>Y</variation>
    <location>
        <position position="3189"/>
    </location>
</feature>
<feature type="sequence conflict" description="In Ref. 1." evidence="12" ref="1">
    <original>L</original>
    <variation>Y</variation>
    <location>
        <position position="3355"/>
    </location>
</feature>
<feature type="sequence conflict" description="In Ref. 4." evidence="12" ref="4">
    <original>A</original>
    <variation>T</variation>
    <location>
        <position position="4136"/>
    </location>
</feature>
<feature type="sequence conflict" description="In Ref. 1." evidence="12" ref="1">
    <original>I</original>
    <variation>T</variation>
    <location>
        <position position="4340"/>
    </location>
</feature>
<feature type="sequence conflict" description="In Ref. 4." evidence="12" ref="4">
    <original>N</original>
    <variation>H</variation>
    <location>
        <position position="4358"/>
    </location>
</feature>
<feature type="sequence conflict" description="In Ref. 4." evidence="12" ref="4">
    <original>I</original>
    <variation>V</variation>
    <location>
        <position position="4699"/>
    </location>
</feature>
<feature type="sequence conflict" description="In Ref. 1." evidence="12" ref="1">
    <original>G</original>
    <variation>S</variation>
    <location>
        <position position="5294"/>
    </location>
</feature>
<feature type="sequence conflict" description="In Ref. 1." evidence="12" ref="1">
    <original>N</original>
    <variation>D</variation>
    <location>
        <position position="5317"/>
    </location>
</feature>
<sequence>MISWEVVHTVFLFALLYSSLAQDASPQSEIRAEEIPEGASTLAFVFDVTGSMYDDLVQVIEGASKILETSLKRPKRPLFNFALVPFHDPEIGPVTITTDPKKFQYELRELYVQGGGDCPEMSIGAIKIALEISLPGSFIYVFTDARSKDYRLTHEVLQLIQQKQSQVVFVLTGDCDDRTHIGYKVYEEIASTSSGQVFHLDKKQVNEVLKWVEEAVQASKVHLLSTDHLEQAVNTWRIPFDPSLKEVTVSLSGPSPMIEIRNPLGKLIKKGFGLHELLNIHNSAKVVNVKEPEAGMWTVKTSSSGRHSVRITGLSTIDFRAGFSRKPTLDFKKTVSRPVQGIPTYVLLNTSGISTPARIDLLELLSISGSSLKTIPVKYYPHRKPYGIWNISDFVPPNEAFFLKVTGYDKDDYLFQRVSSVSFSSIVPDAPKVTMPEKTPGYYLQPGQIPCSVDSLLPFTLSFVRNGVTLGVDQYLKESASVNLDIAKVTLSDEGFYECIAVSSAGTGRAQTFFDVSEPPPVIQVPNNVTVTPGERAVLTCLIISAVDYNLTWQRNDRDVRLAEPARIRTLANLSLELKSVKFNDAGEYHCMVSSEGGSSAASVFLTVQEPPKVTVMPKNQSFTGGSEVSIMCSATGYPKPKIAWTVNDMFIVGSHRYRMTSDGTLFIKNAAPKDAGIYGCLASNSAGTDKQNSTLRYIEAPKLMVVQSELLVALGDITVMECKTSGIPPPQVKWFKGDLELRPSTFLIIDPLLGLLKIQETQDLDAGDYTCVAINEAGRATGKITLDVGSPPVFIQEPADVSMEIGSNVTLPCYVQGYPEPTIKWRRLDNMPIFSRPFSVSSISQLRTGALFILNLWASDKGTYICEAENQFGKIQSETTVTVTGLVAPLIGISPSVANVIEGQQLTLPCTLLAGNPIPERRWIKNSAMLLQNPYITVRSDGSLHIERVQLQDGGEYTCVASNVAGTNNKTTSVVVHVLPTIQHGQQILSTIEGIPVTLPCKASGNPKPSVIWSKKGELISTSSAKFSAGADGSLYVVSPGGEESGEYVCTATNTAGYAKRKVQLTVYVRPRVFGDQRGLSQDKPVEISVLAGEEVTLPCEVKSLPPPIITWAKETQLISPFSPRHTFLPSGSMKITETRTSDSGMYLCVATNIAGNVTQAVKLNVHVPPKIQRGPKHLKVQVGQRVDIPCNAQGTPLPVITWSKGGSTMLVDGEHHVSNPDGTLSIDQATPSDAGIYTCVATNIAGTDETEITLHVQEPPTVEDLEPPYNTTFQERVANQRIEFPCPAKGTPKPTIKWLHNGRELTGREPGISILEDGTLLVIASVTPYDNGEYICVAVNEAGTTERKYNLKVHVPPVIKDKEQVTNVSVLLNQLTNLFCEVEGTPSPIIMWYKDNVQVTESSTIQTVNNGKILKLFRATPEDAGRYSCKAINIAGTSQKYFNIDVLVPPTIIGTNFPNEVSVVLNRDVALECQVKGTPFPDIHWFKDGKPLFLGDPNVELLDRGQVLHLKNARRNDKGRYQCTVSNAAGKQAKDIKLTIYIPPSIKGGNVTTDISVLINSLIKLECETRGLPMPAITWYKDGQPIMSSSQALYIDKGQYLHIPRAQVSDSATYTCHVANVAGTAEKSFHVDVYVPPMIEGNLATPLNKQVVIAHSLTLECKAAGNPSPILTWLKDGVPVKANDNIRIEAGGKKLEIMSAQEIDRGQYICVATSVAGEKEIKYEVDVLVPPAIEGGDETSYFIVMVNNLLELDCHVTGSPPPTIMWLKDGQLIDERDGFKILLNGRKLVIAQAQVSNTGLYRCMAANTAGDHKKEFEVTVHVPPTIKSSGLSERVVVKYKPVALQCIANGIPNPSITWLKDDQPVNTAQGNLKIQSSGRVLQIAKTLLEDAGRYTCVATNAAGETQQHIQLHVHEPPSLEDAGKMLNETVLVSNPVQLECKAAGNPVPVITWYKDNRLLSGSTSMTFLNRGQIIDIESAQISDAGIYKCVAINSAGATELFYSLQVHVAPSISGSNNMVAVVVNNPVRLECEARGIPAPSLTWLKDGSPVSSFSNGLQVLSGGRILALTSAQISDTGRYTCVAVNAAGEKQRDIDLRVYVPPNIMGEEQNVSVLISQAVELLCQSDAIPPPTLTWLKDGHPLLKKPGLSISENRSVLKIEDAQVQDTGRYTCEATNVAGKTEKNYNVNIWVPPNIGGSDELTQLTVIEGNLISLLCESSGIPPPNLIWKKKGSPVLTDSMGRVRILSGGRQLQISIAEKSDAALYSCVASNVAGTAKKEYNLQVYIRPTITNSGSHPTEIIVTRGKSISLECEVQGIPPPTVTWMKDGHPLIKAKGVEILDEGHILQLKNIHVSDTGRYVCVAVNVAGMTDKKYDLSVHAPPSIIGNHRSPENISVVEKNSVSLTCEASGIPLPSITWFKDGWPVSLSNSVRILSGGRMLRLMQTTMEDAGQYTCVVRNAAGEERKIFGLSVLVPPHIVGENTLEDVKVKEKQSVTLTCEVTGNPVPEITWHKDGQPLQEDEAHHIISGGRFLQITNVQVPHTGRYTCLASSPAGHKSRSFSLNVFVSPTIAGVGSDGNPEDVTVILNSPTSLVCEAYSYPPATITWFKDGTPLESNRNIRILPGGRTLQILNAQEDNAGRYSCVATNEAGEMIKHYEVKVYIPPIINKGDLWGPGLSPKEVKIKVNNTLTLECEAYAIPSASLSWYKDGQPLKSDDHVNIAANGHTLQIKEAQISDTGRYTCVASNIAGEDELDFDVNIQVPPSFQKLWEIGNMLDTGRNGEAKDVIINNPISLYCETNAAPPPTLTWYKDGHPLTSSDKVLILPGGRVLQIPRAKVEDAGRYTCVAVNEAGEDSLQYDVRVLVPPIIKGANSDLPEEVTVLVNKSALIECLSSGSPAPRNSWQKDGQPLLEDDHHKFLSNGRILQILNTQITDIGRYVCVAENTAGSAKKYFNLNVHVPPSVIGPKSENLTVVVNNFISLTCEVSGFPPPDLSWLKNEQPIKLNTNTLIVPGGRTLQIIRAKVSDGGEYTCIAINQAGESKKKFSLTVYVPPSIKDHDSESLSVVNVREGTSVSLECESNAVPPPVITWYKNGRMITESTHVEILADGQMLHIKKAEVSDTGQYVCRAINVAGRDDKNFHLNVYVPPSIEGPEREVIVETISNPVTLTCDATGIPPPTIAWLKNHKRIENSDSLEVRILSGGSKLQIARSQHSDSGNYTCIASNMEGKAQKYYFLSIQVPPSVAGAEIPSDVSVLLGENVELVCNANGIPTPLIQWLKDGKPIASGETERIRVSANGSTLNIYGALTSDTGKYTCVATNPAGEEDRIFNLNVYVTPTIRGNKDEAEKLMTLVDTSINIECRATGTPPPQINWLKNGLPLPLSSHIRLLAAGQVIRIVRAQVSDVAVYTCVASNRAGVDNKHYNLQVFAPPNMDNSMGTEEITVLKGSSTSMACITDGTPAPSMAWLRDGQPLGLDAHLTVSTHGMVLQLLKAETEDSGKYTCIASNEAGEVSKHFILKVLEPPHINGSEEHEEISVIVNNPLELTCIASGIPAPKMTWMKDGRPLPQTDQVQTLGGGEVLRISTAQVEDTGRYTCLASSPAGDDDKEYLVRVHVPPNIAGTDEPRDITVLRNRQVTLECKSDAVPPPVITWLRNGERLQATPRVRILSGGRYLQINNADLGDTANYTCVASNIAGKTTREFILTVNVPPNIKGGPQSLVILLNKSTVLECIAEGVPTPRITWRKDGAVLAGNHARYSILENGFLHIQSAHVTDTGRYLCMATNAAGTDRRRIDLQVHVPPSIAPGPTNMTVIVNVQTTLACEATGIPKPSINWRKNGHLLNVDQNQNSYRLLSSGSLVIISPSVDDTATYECTVTNGAGDDKRTVDLTVQVPPSIADEPTDFLVTKHAPAVITCTASGVPFPSIHWTKNGIRLLPRGDGYRILSSGAIEILATQLNHAGRYTCVARNAAGSAHRHVTLHVHEPPVIQPQPSELHVILNNPILLPCEATGTPSPFITWQKEGINVNTSGRNHAVLPSGGLQISRAVREDAGTYMCVAQNPAGTALGKIKLNVQVPPVISPHLKEYVIAVDKPITLSCEADGLPPPDITWHKDGRAIVESIRQRVLSSGSLQIAFVQPGDAGHYTCMAANVAGSSSTSTKLTVHVPPRIRSTEGHYTVNENSQAILPCVADGIPTPAINWKKDNVLLANLLGKYTAEPYGELILENVVLEDSGFYTCVANNAAGEDTHTVSLTVHVLPTFTELPGDVSLNKGEQLRLSCKATGIPLPKLTWTFNNNIIPAHFDSVNGHSELVIERVSKEDSGTYVCTAENSVGFVKAIGFVYVKEPPVFKGDYPSNWIEPLGGNAILNCEVKGDPTPTIQWNRKGVDIEISHRIRQLGNGSLAIYGTVNEDAGDYTCVATNEAGVVERSMSLTLQSPPIITLEPVETVINAGGKIILNCQATGEPQPTITWSRQGHSISWDDRVNVLSNNSLYIADAQKEDTSEFECVARNLMGSVLVRVPVIVQVHGGFSQWSAWRACSVTCGKGIQKRSRLCNQPLPANGGKPCQGSDLEMRNCQNKPCPVDGSWSEWSLWEECTRSCGRGNQTRTRTCNNPSVQHGGRPCEGNAVEIIMCNIRPCPVHGAWSAWQPWGTCSESCGKGTQTRARLCNNPPPAFGGSYCDGAETQMQVCNERNCPIHGKWATWASWSACSVSCGGGARQRTRGCSDPVPQYGGRKCEGSDVQSDFCNSDPCPTHGNWSPWSGWGTCSRTCNGGQMRRYRTCDNPPPSNGGRACGGPDSQIQRCNTDMCPVDGSWGSWHSWSQCSASCGGGEKTRKRLCDHPVPVKGGRPCPGDTTQVTRCNVQACPGGPQRARGSVIGNINDVEFGIAFLNATITDSPNSDTRIIRAKITNVPRSLGSAMRKIVSILNPIYWTTAKEIGEAVNGFTLTNAVFKRETQVEFATGEILQMSHIARGLDSDGSLLLDIVVSGYVLQLQSPAEVTVKDYTEDYIQTGPGQLYAYSTRLFTIDGISIPYTWNHTVFYDQAQGRMPFLVETLHASSVESDYNQIEETLGFKIHASISKGDRSNQCPSGFTLDSVGPFCADEDECAAGNPCSHSCHNAMGTYYCSCPKGLTIAADGRTCQDIDECALGRHTCHAGQDCDNTIGSYRCVVRCGSGFRRTSDGLSCQDINECQESSPCHQRCFNAIGSFHCGCEPGYQLKGRKCMDVNECRQNVCRPDQHCKNTRGGYKCIDLCPNGMTKAENGTCIDIDECKDGTHQCRYNQICENTRGSYRCVCPRGYRSQGVGRPCMDINECEQVPKPCAHQCSNTPGSFKCICPPGQHLLGDGKSCAGLERLPNYGTQYSSYNLARFSPVRNNYQPQQHYRQYSHLYSSYSEYRNSRTSLSRTRRTIRKTCPEGSEASHDTCVDIDECENTDACQHECKNTFGSYQCICPPGYQLTHNGKTCQDIDECLEQNVHCGPNRMCFNMRGSYQCIDTPCPPNYQRDPVSGFCLKNCPPNDLECALSPYALEYKLVSLPFGIATNQDLIRLVAYTQDGVMHPRTTFLMVDEEQTVPFALRDENLKGVVYTTRPLREAETYRMRVRASSYSANGTIEYQTTFIVYIAVSAYPY</sequence>
<comment type="function">
    <text evidence="2 8">Involved in transforming growth factor beta-mediated rearrangement of the podocyte cytoskeleton which includes reduction of F-actin fibers and broadening, flattening and elongation of podocytes (PubMed:29488390). Plays a role in basement membrane organization (By similarity). May promote cleavage furrow maturation during cytokinesis in preimplantation embryos (By similarity). May play a role in the architecture of adhesive and flexible epithelial cell junctions (By similarity). May play a role during myocardial remodeling by imparting an effect on cardiac fibroblast migration (By similarity).</text>
</comment>
<comment type="interaction">
    <interactant intactId="EBI-2806183">
        <id>Q96RW7</id>
    </interactant>
    <interactant intactId="EBI-21986906">
        <id>P0C7Q2</id>
        <label>ARMS2</label>
    </interactant>
    <organismsDiffer>false</organismsDiffer>
    <experiments>4</experiments>
</comment>
<comment type="subcellular location">
    <subcellularLocation>
        <location evidence="2">Secreted</location>
        <location evidence="2">Extracellular space</location>
        <location evidence="2">Extracellular matrix</location>
        <location evidence="2">Basement membrane</location>
    </subcellularLocation>
    <subcellularLocation>
        <location evidence="2">Cytoplasm</location>
    </subcellularLocation>
    <subcellularLocation>
        <location evidence="2">Cell junction</location>
    </subcellularLocation>
    <subcellularLocation>
        <location evidence="2">Cleavage furrow</location>
    </subcellularLocation>
    <text evidence="2">Has been detected in the glomerular basement membrane in one study. However, another study found expression in the glomerular mesangial matrix but not in the glomerular basement membrane. The antibody used to determine subcellular location does not distinguish between HMCN1 and HMCN2.</text>
</comment>
<comment type="alternative products">
    <event type="alternative splicing"/>
    <isoform>
        <id>Q96RW7-1</id>
        <name>1</name>
        <sequence type="displayed"/>
    </isoform>
    <isoform>
        <id>Q96RW7-2</id>
        <name>2</name>
        <sequence type="described" ref="VSP_016874"/>
    </isoform>
    <isoform>
        <id>Q96RW7-3</id>
        <name>3</name>
        <sequence type="described" ref="VSP_016871 VSP_016872 VSP_016873"/>
    </isoform>
</comment>
<comment type="tissue specificity">
    <text evidence="9">Expressed in hair follicles and in the dermis (at protein level).</text>
</comment>
<comment type="tissue specificity">
    <molecule>Isoform 1</molecule>
    <text evidence="7">Expressed in skin fibroblasts and retinal pigment epithelium (RPE) cells.</text>
</comment>
<comment type="tissue specificity">
    <molecule>Isoform 2</molecule>
    <text evidence="7">Expressed in skin fibroblasts and retinal pigment epithelium (RPE) cells.</text>
</comment>
<comment type="induction">
    <text evidence="8">Induced by high glucose levels and transforming growth factor beta (at protein level).</text>
</comment>
<comment type="disease" evidence="7">
    <disease id="DI-00055">
        <name>Macular degeneration, age-related, 1</name>
        <acronym>ARMD1</acronym>
        <description>A form of age-related macular degeneration, a multifactorial eye disease and the most common cause of irreversible vision loss in the developed world. In most patients, the disease is manifest as ophthalmoscopically visible yellowish accumulations of protein and lipid that lie beneath the retinal pigment epithelium and within an elastin-containing structure known as Bruch membrane.</description>
        <dbReference type="MIM" id="603075"/>
    </disease>
    <text>The disease is caused by variants affecting the gene represented in this entry.</text>
</comment>
<comment type="caution">
    <text evidence="2">Has been shown in one study to play a role in cleavage furrow maturation during cytokinesis. However, other studies have shown no role in this process.</text>
</comment>
<comment type="sequence caution" evidence="12">
    <conflict type="frameshift">
        <sequence resource="EMBL-CDS" id="BAB71154"/>
    </conflict>
</comment>
<comment type="sequence caution" evidence="12">
    <conflict type="erroneous initiation">
        <sequence resource="EMBL-CDS" id="BAB71216"/>
    </conflict>
</comment>
<reference key="1">
    <citation type="submission" date="1999-06" db="EMBL/GenBank/DDBJ databases">
        <title>Human hemicentin gene.</title>
        <authorList>
            <person name="Trent J."/>
        </authorList>
    </citation>
    <scope>NUCLEOTIDE SEQUENCE [MRNA] (ISOFORM 1)</scope>
    <scope>VARIANT THR-2418</scope>
</reference>
<reference key="2">
    <citation type="journal article" date="2004" name="Nat. Genet.">
        <title>Complete sequencing and characterization of 21,243 full-length human cDNAs.</title>
        <authorList>
            <person name="Ota T."/>
            <person name="Suzuki Y."/>
            <person name="Nishikawa T."/>
            <person name="Otsuki T."/>
            <person name="Sugiyama T."/>
            <person name="Irie R."/>
            <person name="Wakamatsu A."/>
            <person name="Hayashi K."/>
            <person name="Sato H."/>
            <person name="Nagai K."/>
            <person name="Kimura K."/>
            <person name="Makita H."/>
            <person name="Sekine M."/>
            <person name="Obayashi M."/>
            <person name="Nishi T."/>
            <person name="Shibahara T."/>
            <person name="Tanaka T."/>
            <person name="Ishii S."/>
            <person name="Yamamoto J."/>
            <person name="Saito K."/>
            <person name="Kawai Y."/>
            <person name="Isono Y."/>
            <person name="Nakamura Y."/>
            <person name="Nagahari K."/>
            <person name="Murakami K."/>
            <person name="Yasuda T."/>
            <person name="Iwayanagi T."/>
            <person name="Wagatsuma M."/>
            <person name="Shiratori A."/>
            <person name="Sudo H."/>
            <person name="Hosoiri T."/>
            <person name="Kaku Y."/>
            <person name="Kodaira H."/>
            <person name="Kondo H."/>
            <person name="Sugawara M."/>
            <person name="Takahashi M."/>
            <person name="Kanda K."/>
            <person name="Yokoi T."/>
            <person name="Furuya T."/>
            <person name="Kikkawa E."/>
            <person name="Omura Y."/>
            <person name="Abe K."/>
            <person name="Kamihara K."/>
            <person name="Katsuta N."/>
            <person name="Sato K."/>
            <person name="Tanikawa M."/>
            <person name="Yamazaki M."/>
            <person name="Ninomiya K."/>
            <person name="Ishibashi T."/>
            <person name="Yamashita H."/>
            <person name="Murakawa K."/>
            <person name="Fujimori K."/>
            <person name="Tanai H."/>
            <person name="Kimata M."/>
            <person name="Watanabe M."/>
            <person name="Hiraoka S."/>
            <person name="Chiba Y."/>
            <person name="Ishida S."/>
            <person name="Ono Y."/>
            <person name="Takiguchi S."/>
            <person name="Watanabe S."/>
            <person name="Yosida M."/>
            <person name="Hotuta T."/>
            <person name="Kusano J."/>
            <person name="Kanehori K."/>
            <person name="Takahashi-Fujii A."/>
            <person name="Hara H."/>
            <person name="Tanase T.-O."/>
            <person name="Nomura Y."/>
            <person name="Togiya S."/>
            <person name="Komai F."/>
            <person name="Hara R."/>
            <person name="Takeuchi K."/>
            <person name="Arita M."/>
            <person name="Imose N."/>
            <person name="Musashino K."/>
            <person name="Yuuki H."/>
            <person name="Oshima A."/>
            <person name="Sasaki N."/>
            <person name="Aotsuka S."/>
            <person name="Yoshikawa Y."/>
            <person name="Matsunawa H."/>
            <person name="Ichihara T."/>
            <person name="Shiohata N."/>
            <person name="Sano S."/>
            <person name="Moriya S."/>
            <person name="Momiyama H."/>
            <person name="Satoh N."/>
            <person name="Takami S."/>
            <person name="Terashima Y."/>
            <person name="Suzuki O."/>
            <person name="Nakagawa S."/>
            <person name="Senoh A."/>
            <person name="Mizoguchi H."/>
            <person name="Goto Y."/>
            <person name="Shimizu F."/>
            <person name="Wakebe H."/>
            <person name="Hishigaki H."/>
            <person name="Watanabe T."/>
            <person name="Sugiyama A."/>
            <person name="Takemoto M."/>
            <person name="Kawakami B."/>
            <person name="Yamazaki M."/>
            <person name="Watanabe K."/>
            <person name="Kumagai A."/>
            <person name="Itakura S."/>
            <person name="Fukuzumi Y."/>
            <person name="Fujimori Y."/>
            <person name="Komiyama M."/>
            <person name="Tashiro H."/>
            <person name="Tanigami A."/>
            <person name="Fujiwara T."/>
            <person name="Ono T."/>
            <person name="Yamada K."/>
            <person name="Fujii Y."/>
            <person name="Ozaki K."/>
            <person name="Hirao M."/>
            <person name="Ohmori Y."/>
            <person name="Kawabata A."/>
            <person name="Hikiji T."/>
            <person name="Kobatake N."/>
            <person name="Inagaki H."/>
            <person name="Ikema Y."/>
            <person name="Okamoto S."/>
            <person name="Okitani R."/>
            <person name="Kawakami T."/>
            <person name="Noguchi S."/>
            <person name="Itoh T."/>
            <person name="Shigeta K."/>
            <person name="Senba T."/>
            <person name="Matsumura K."/>
            <person name="Nakajima Y."/>
            <person name="Mizuno T."/>
            <person name="Morinaga M."/>
            <person name="Sasaki M."/>
            <person name="Togashi T."/>
            <person name="Oyama M."/>
            <person name="Hata H."/>
            <person name="Watanabe M."/>
            <person name="Komatsu T."/>
            <person name="Mizushima-Sugano J."/>
            <person name="Satoh T."/>
            <person name="Shirai Y."/>
            <person name="Takahashi Y."/>
            <person name="Nakagawa K."/>
            <person name="Okumura K."/>
            <person name="Nagase T."/>
            <person name="Nomura N."/>
            <person name="Kikuchi H."/>
            <person name="Masuho Y."/>
            <person name="Yamashita R."/>
            <person name="Nakai K."/>
            <person name="Yada T."/>
            <person name="Nakamura Y."/>
            <person name="Ohara O."/>
            <person name="Isogai T."/>
            <person name="Sugano S."/>
        </authorList>
    </citation>
    <scope>NUCLEOTIDE SEQUENCE [LARGE SCALE MRNA] (ISOFORM 3)</scope>
    <scope>NUCLEOTIDE SEQUENCE [LARGE SCALE MRNA] OF 892-2181</scope>
</reference>
<reference key="3">
    <citation type="journal article" date="2006" name="Nature">
        <title>The DNA sequence and biological annotation of human chromosome 1.</title>
        <authorList>
            <person name="Gregory S.G."/>
            <person name="Barlow K.F."/>
            <person name="McLay K.E."/>
            <person name="Kaul R."/>
            <person name="Swarbreck D."/>
            <person name="Dunham A."/>
            <person name="Scott C.E."/>
            <person name="Howe K.L."/>
            <person name="Woodfine K."/>
            <person name="Spencer C.C.A."/>
            <person name="Jones M.C."/>
            <person name="Gillson C."/>
            <person name="Searle S."/>
            <person name="Zhou Y."/>
            <person name="Kokocinski F."/>
            <person name="McDonald L."/>
            <person name="Evans R."/>
            <person name="Phillips K."/>
            <person name="Atkinson A."/>
            <person name="Cooper R."/>
            <person name="Jones C."/>
            <person name="Hall R.E."/>
            <person name="Andrews T.D."/>
            <person name="Lloyd C."/>
            <person name="Ainscough R."/>
            <person name="Almeida J.P."/>
            <person name="Ambrose K.D."/>
            <person name="Anderson F."/>
            <person name="Andrew R.W."/>
            <person name="Ashwell R.I.S."/>
            <person name="Aubin K."/>
            <person name="Babbage A.K."/>
            <person name="Bagguley C.L."/>
            <person name="Bailey J."/>
            <person name="Beasley H."/>
            <person name="Bethel G."/>
            <person name="Bird C.P."/>
            <person name="Bray-Allen S."/>
            <person name="Brown J.Y."/>
            <person name="Brown A.J."/>
            <person name="Buckley D."/>
            <person name="Burton J."/>
            <person name="Bye J."/>
            <person name="Carder C."/>
            <person name="Chapman J.C."/>
            <person name="Clark S.Y."/>
            <person name="Clarke G."/>
            <person name="Clee C."/>
            <person name="Cobley V."/>
            <person name="Collier R.E."/>
            <person name="Corby N."/>
            <person name="Coville G.J."/>
            <person name="Davies J."/>
            <person name="Deadman R."/>
            <person name="Dunn M."/>
            <person name="Earthrowl M."/>
            <person name="Ellington A.G."/>
            <person name="Errington H."/>
            <person name="Frankish A."/>
            <person name="Frankland J."/>
            <person name="French L."/>
            <person name="Garner P."/>
            <person name="Garnett J."/>
            <person name="Gay L."/>
            <person name="Ghori M.R.J."/>
            <person name="Gibson R."/>
            <person name="Gilby L.M."/>
            <person name="Gillett W."/>
            <person name="Glithero R.J."/>
            <person name="Grafham D.V."/>
            <person name="Griffiths C."/>
            <person name="Griffiths-Jones S."/>
            <person name="Grocock R."/>
            <person name="Hammond S."/>
            <person name="Harrison E.S.I."/>
            <person name="Hart E."/>
            <person name="Haugen E."/>
            <person name="Heath P.D."/>
            <person name="Holmes S."/>
            <person name="Holt K."/>
            <person name="Howden P.J."/>
            <person name="Hunt A.R."/>
            <person name="Hunt S.E."/>
            <person name="Hunter G."/>
            <person name="Isherwood J."/>
            <person name="James R."/>
            <person name="Johnson C."/>
            <person name="Johnson D."/>
            <person name="Joy A."/>
            <person name="Kay M."/>
            <person name="Kershaw J.K."/>
            <person name="Kibukawa M."/>
            <person name="Kimberley A.M."/>
            <person name="King A."/>
            <person name="Knights A.J."/>
            <person name="Lad H."/>
            <person name="Laird G."/>
            <person name="Lawlor S."/>
            <person name="Leongamornlert D.A."/>
            <person name="Lloyd D.M."/>
            <person name="Loveland J."/>
            <person name="Lovell J."/>
            <person name="Lush M.J."/>
            <person name="Lyne R."/>
            <person name="Martin S."/>
            <person name="Mashreghi-Mohammadi M."/>
            <person name="Matthews L."/>
            <person name="Matthews N.S.W."/>
            <person name="McLaren S."/>
            <person name="Milne S."/>
            <person name="Mistry S."/>
            <person name="Moore M.J.F."/>
            <person name="Nickerson T."/>
            <person name="O'Dell C.N."/>
            <person name="Oliver K."/>
            <person name="Palmeiri A."/>
            <person name="Palmer S.A."/>
            <person name="Parker A."/>
            <person name="Patel D."/>
            <person name="Pearce A.V."/>
            <person name="Peck A.I."/>
            <person name="Pelan S."/>
            <person name="Phelps K."/>
            <person name="Phillimore B.J."/>
            <person name="Plumb R."/>
            <person name="Rajan J."/>
            <person name="Raymond C."/>
            <person name="Rouse G."/>
            <person name="Saenphimmachak C."/>
            <person name="Sehra H.K."/>
            <person name="Sheridan E."/>
            <person name="Shownkeen R."/>
            <person name="Sims S."/>
            <person name="Skuce C.D."/>
            <person name="Smith M."/>
            <person name="Steward C."/>
            <person name="Subramanian S."/>
            <person name="Sycamore N."/>
            <person name="Tracey A."/>
            <person name="Tromans A."/>
            <person name="Van Helmond Z."/>
            <person name="Wall M."/>
            <person name="Wallis J.M."/>
            <person name="White S."/>
            <person name="Whitehead S.L."/>
            <person name="Wilkinson J.E."/>
            <person name="Willey D.L."/>
            <person name="Williams H."/>
            <person name="Wilming L."/>
            <person name="Wray P.W."/>
            <person name="Wu Z."/>
            <person name="Coulson A."/>
            <person name="Vaudin M."/>
            <person name="Sulston J.E."/>
            <person name="Durbin R.M."/>
            <person name="Hubbard T."/>
            <person name="Wooster R."/>
            <person name="Dunham I."/>
            <person name="Carter N.P."/>
            <person name="McVean G."/>
            <person name="Ross M.T."/>
            <person name="Harrow J."/>
            <person name="Olson M.V."/>
            <person name="Beck S."/>
            <person name="Rogers J."/>
            <person name="Bentley D.R."/>
        </authorList>
    </citation>
    <scope>NUCLEOTIDE SEQUENCE [LARGE SCALE GENOMIC DNA]</scope>
</reference>
<reference key="4">
    <citation type="submission" date="2001-04" db="EMBL/GenBank/DDBJ databases">
        <title>Partial sequence of fibulin-6 with a C-terminal region related to domain II and III of the fibulin family.</title>
        <authorList>
            <person name="Kostka G."/>
            <person name="Timpl R."/>
        </authorList>
    </citation>
    <scope>NUCLEOTIDE SEQUENCE [MRNA] OF 2963-5635</scope>
    <source>
        <tissue>Melanoma</tissue>
    </source>
</reference>
<reference key="5">
    <citation type="journal article" date="2018" name="Am. J. Physiol.">
        <title>Hemicentin 1 influences podocyte dynamic changes in glomerular diseases.</title>
        <authorList>
            <person name="Toffoli B."/>
            <person name="Zennaro C."/>
            <person name="Winkler C."/>
            <person name="Giordano Attianese G.M.P."/>
            <person name="Bernardi S."/>
            <person name="Carraro M."/>
            <person name="Gilardi F."/>
            <person name="Desvergne B."/>
        </authorList>
    </citation>
    <scope>FUNCTION</scope>
    <scope>INDUCTION</scope>
</reference>
<reference key="6">
    <citation type="journal article" date="2020" name="Dev. Dyn.">
        <title>Mammalian hemicentin 1 is assembled into tracks in the extracellular matrix of multiple tissues.</title>
        <authorList>
            <person name="Lin M.H."/>
            <person name="Pope B.D. III"/>
            <person name="Sasaki T."/>
            <person name="Keeley D.P."/>
            <person name="Sherwood D.R."/>
            <person name="Miner J.H."/>
        </authorList>
    </citation>
    <scope>TISSUE SPECIFICITY</scope>
</reference>
<reference key="7">
    <citation type="journal article" date="2003" name="Hum. Mol. Genet.">
        <title>Analysis of the ARMD1 locus: evidence that a mutation in hemicentin-1 is associated with age-related macular degeneration in a large family.</title>
        <authorList>
            <person name="Schultz D.W."/>
            <person name="Klein M.L."/>
            <person name="Humpert A.J."/>
            <person name="Luzier C.W."/>
            <person name="Persun V."/>
            <person name="Schain M."/>
            <person name="Mahan A."/>
            <person name="Runckel C."/>
            <person name="Cassera M."/>
            <person name="Vittal V."/>
            <person name="Doyle T.M."/>
            <person name="Martin T.M."/>
            <person name="Weleber R.G."/>
            <person name="Francis P.J."/>
            <person name="Acott T.S."/>
        </authorList>
    </citation>
    <scope>VARIANT ARMD1 ARG-5345</scope>
    <scope>VARIANTS VAL-1624; ILE-2327; THR-2418; GLY-2893; TYR-4084; THR-4720 AND VAL-5087</scope>
    <scope>TISSUE SPECIFICITY</scope>
    <scope>ALTERNATIVE SPLICING (ISOFORM 2)</scope>
</reference>
<name>HMCN1_HUMAN</name>
<dbReference type="EMBL" id="AF156100">
    <property type="protein sequence ID" value="AAK68690.1"/>
    <property type="molecule type" value="mRNA"/>
</dbReference>
<dbReference type="EMBL" id="AK056336">
    <property type="protein sequence ID" value="BAB71154.1"/>
    <property type="status" value="ALT_SEQ"/>
    <property type="molecule type" value="mRNA"/>
</dbReference>
<dbReference type="EMBL" id="AK056557">
    <property type="protein sequence ID" value="BAB71216.1"/>
    <property type="status" value="ALT_INIT"/>
    <property type="molecule type" value="mRNA"/>
</dbReference>
<dbReference type="EMBL" id="AL118512">
    <property type="status" value="NOT_ANNOTATED_CDS"/>
    <property type="molecule type" value="Genomic_DNA"/>
</dbReference>
<dbReference type="EMBL" id="AL121996">
    <property type="status" value="NOT_ANNOTATED_CDS"/>
    <property type="molecule type" value="Genomic_DNA"/>
</dbReference>
<dbReference type="EMBL" id="AL133515">
    <property type="status" value="NOT_ANNOTATED_CDS"/>
    <property type="molecule type" value="Genomic_DNA"/>
</dbReference>
<dbReference type="EMBL" id="AL133553">
    <property type="status" value="NOT_ANNOTATED_CDS"/>
    <property type="molecule type" value="Genomic_DNA"/>
</dbReference>
<dbReference type="EMBL" id="AL135796">
    <property type="status" value="NOT_ANNOTATED_CDS"/>
    <property type="molecule type" value="Genomic_DNA"/>
</dbReference>
<dbReference type="EMBL" id="AL135797">
    <property type="status" value="NOT_ANNOTATED_CDS"/>
    <property type="molecule type" value="Genomic_DNA"/>
</dbReference>
<dbReference type="EMBL" id="AL391824">
    <property type="status" value="NOT_ANNOTATED_CDS"/>
    <property type="molecule type" value="Genomic_DNA"/>
</dbReference>
<dbReference type="EMBL" id="BX928748">
    <property type="status" value="NOT_ANNOTATED_CDS"/>
    <property type="molecule type" value="Genomic_DNA"/>
</dbReference>
<dbReference type="EMBL" id="AJ306906">
    <property type="protein sequence ID" value="CAC37630.1"/>
    <property type="molecule type" value="mRNA"/>
</dbReference>
<dbReference type="CCDS" id="CCDS30956.1">
    <molecule id="Q96RW7-1"/>
</dbReference>
<dbReference type="RefSeq" id="NP_114141.2">
    <molecule id="Q96RW7-1"/>
    <property type="nucleotide sequence ID" value="NM_031935.3"/>
</dbReference>
<dbReference type="RefSeq" id="XP_011508340.1">
    <molecule id="Q96RW7-2"/>
    <property type="nucleotide sequence ID" value="XM_011510038.4"/>
</dbReference>
<dbReference type="BioGRID" id="123785">
    <property type="interactions" value="11"/>
</dbReference>
<dbReference type="FunCoup" id="Q96RW7">
    <property type="interactions" value="245"/>
</dbReference>
<dbReference type="IntAct" id="Q96RW7">
    <property type="interactions" value="9"/>
</dbReference>
<dbReference type="STRING" id="9606.ENSP00000271588"/>
<dbReference type="CarbonylDB" id="Q96RW7"/>
<dbReference type="GlyConnect" id="1306">
    <property type="glycosylation" value="1 N-Linked glycan (1 site)"/>
</dbReference>
<dbReference type="GlyCosmos" id="Q96RW7">
    <property type="glycosylation" value="34 sites, 1 glycan"/>
</dbReference>
<dbReference type="GlyGen" id="Q96RW7">
    <property type="glycosylation" value="43 sites, 21 N-linked glycans (14 sites), 1 O-linked glycan (7 sites)"/>
</dbReference>
<dbReference type="iPTMnet" id="Q96RW7"/>
<dbReference type="PhosphoSitePlus" id="Q96RW7"/>
<dbReference type="SwissPalm" id="Q96RW7"/>
<dbReference type="BioMuta" id="HMCN1"/>
<dbReference type="DMDM" id="85542049"/>
<dbReference type="jPOST" id="Q96RW7"/>
<dbReference type="MassIVE" id="Q96RW7"/>
<dbReference type="PaxDb" id="9606-ENSP00000271588"/>
<dbReference type="PeptideAtlas" id="Q96RW7"/>
<dbReference type="ProteomicsDB" id="78045">
    <molecule id="Q96RW7-1"/>
</dbReference>
<dbReference type="ProteomicsDB" id="78046">
    <molecule id="Q96RW7-2"/>
</dbReference>
<dbReference type="ProteomicsDB" id="78047">
    <molecule id="Q96RW7-3"/>
</dbReference>
<dbReference type="Antibodypedia" id="63332">
    <property type="antibodies" value="23 antibodies from 10 providers"/>
</dbReference>
<dbReference type="DNASU" id="83872"/>
<dbReference type="Ensembl" id="ENST00000271588.9">
    <molecule id="Q96RW7-1"/>
    <property type="protein sequence ID" value="ENSP00000271588.4"/>
    <property type="gene ID" value="ENSG00000143341.12"/>
</dbReference>
<dbReference type="GeneID" id="83872"/>
<dbReference type="KEGG" id="hsa:83872"/>
<dbReference type="MANE-Select" id="ENST00000271588.9">
    <property type="protein sequence ID" value="ENSP00000271588.4"/>
    <property type="RefSeq nucleotide sequence ID" value="NM_031935.3"/>
    <property type="RefSeq protein sequence ID" value="NP_114141.2"/>
</dbReference>
<dbReference type="UCSC" id="uc001grq.2">
    <molecule id="Q96RW7-1"/>
    <property type="organism name" value="human"/>
</dbReference>
<dbReference type="AGR" id="HGNC:19194"/>
<dbReference type="CTD" id="83872"/>
<dbReference type="DisGeNET" id="83872"/>
<dbReference type="GeneCards" id="HMCN1"/>
<dbReference type="HGNC" id="HGNC:19194">
    <property type="gene designation" value="HMCN1"/>
</dbReference>
<dbReference type="HPA" id="ENSG00000143341">
    <property type="expression patterns" value="Tissue enhanced (lung)"/>
</dbReference>
<dbReference type="MalaCards" id="HMCN1"/>
<dbReference type="MIM" id="603075">
    <property type="type" value="phenotype"/>
</dbReference>
<dbReference type="MIM" id="608548">
    <property type="type" value="gene"/>
</dbReference>
<dbReference type="neXtProt" id="NX_Q96RW7"/>
<dbReference type="OpenTargets" id="ENSG00000143341"/>
<dbReference type="PharmGKB" id="PA142671679"/>
<dbReference type="VEuPathDB" id="HostDB:ENSG00000143341"/>
<dbReference type="eggNOG" id="KOG4475">
    <property type="taxonomic scope" value="Eukaryota"/>
</dbReference>
<dbReference type="GeneTree" id="ENSGT00940000154614"/>
<dbReference type="HOGENOM" id="CLU_000087_0_0_1"/>
<dbReference type="InParanoid" id="Q96RW7"/>
<dbReference type="OMA" id="FPSIHWM"/>
<dbReference type="OrthoDB" id="5985519at2759"/>
<dbReference type="PAN-GO" id="Q96RW7">
    <property type="GO annotations" value="4 GO annotations based on evolutionary models"/>
</dbReference>
<dbReference type="PhylomeDB" id="Q96RW7"/>
<dbReference type="PathwayCommons" id="Q96RW7"/>
<dbReference type="SignaLink" id="Q96RW7"/>
<dbReference type="BioGRID-ORCS" id="83872">
    <property type="hits" value="23 hits in 1155 CRISPR screens"/>
</dbReference>
<dbReference type="ChiTaRS" id="HMCN1">
    <property type="organism name" value="human"/>
</dbReference>
<dbReference type="GeneWiki" id="HMCN1"/>
<dbReference type="GenomeRNAi" id="83872"/>
<dbReference type="Pharos" id="Q96RW7">
    <property type="development level" value="Tbio"/>
</dbReference>
<dbReference type="PRO" id="PR:Q96RW7"/>
<dbReference type="Proteomes" id="UP000005640">
    <property type="component" value="Chromosome 1"/>
</dbReference>
<dbReference type="RNAct" id="Q96RW7">
    <property type="molecule type" value="protein"/>
</dbReference>
<dbReference type="Bgee" id="ENSG00000143341">
    <property type="expression patterns" value="Expressed in descending thoracic aorta and 141 other cell types or tissues"/>
</dbReference>
<dbReference type="ExpressionAtlas" id="Q96RW7">
    <property type="expression patterns" value="baseline and differential"/>
</dbReference>
<dbReference type="GO" id="GO:0005912">
    <property type="term" value="C:adherens junction"/>
    <property type="evidence" value="ECO:0000318"/>
    <property type="project" value="GO_Central"/>
</dbReference>
<dbReference type="GO" id="GO:0005604">
    <property type="term" value="C:basement membrane"/>
    <property type="evidence" value="ECO:0000250"/>
    <property type="project" value="UniProtKB"/>
</dbReference>
<dbReference type="GO" id="GO:0005938">
    <property type="term" value="C:cell cortex"/>
    <property type="evidence" value="ECO:0007669"/>
    <property type="project" value="Ensembl"/>
</dbReference>
<dbReference type="GO" id="GO:0032154">
    <property type="term" value="C:cleavage furrow"/>
    <property type="evidence" value="ECO:0007669"/>
    <property type="project" value="UniProtKB-SubCell"/>
</dbReference>
<dbReference type="GO" id="GO:0062023">
    <property type="term" value="C:collagen-containing extracellular matrix"/>
    <property type="evidence" value="ECO:0007005"/>
    <property type="project" value="BHF-UCL"/>
</dbReference>
<dbReference type="GO" id="GO:0005737">
    <property type="term" value="C:cytoplasm"/>
    <property type="evidence" value="ECO:0000250"/>
    <property type="project" value="UniProtKB"/>
</dbReference>
<dbReference type="GO" id="GO:0070062">
    <property type="term" value="C:extracellular exosome"/>
    <property type="evidence" value="ECO:0007005"/>
    <property type="project" value="UniProtKB"/>
</dbReference>
<dbReference type="GO" id="GO:0005927">
    <property type="term" value="C:muscle tendon junction"/>
    <property type="evidence" value="ECO:0000250"/>
    <property type="project" value="UniProtKB"/>
</dbReference>
<dbReference type="GO" id="GO:0005509">
    <property type="term" value="F:calcium ion binding"/>
    <property type="evidence" value="ECO:0007669"/>
    <property type="project" value="InterPro"/>
</dbReference>
<dbReference type="GO" id="GO:0005201">
    <property type="term" value="F:extracellular matrix structural constituent"/>
    <property type="evidence" value="ECO:0007005"/>
    <property type="project" value="BHF-UCL"/>
</dbReference>
<dbReference type="GO" id="GO:0030036">
    <property type="term" value="P:actin cytoskeleton organization"/>
    <property type="evidence" value="ECO:0000315"/>
    <property type="project" value="UniProtKB"/>
</dbReference>
<dbReference type="GO" id="GO:0071711">
    <property type="term" value="P:basement membrane organization"/>
    <property type="evidence" value="ECO:0000250"/>
    <property type="project" value="UniProtKB"/>
</dbReference>
<dbReference type="GO" id="GO:0051301">
    <property type="term" value="P:cell division"/>
    <property type="evidence" value="ECO:0007669"/>
    <property type="project" value="UniProtKB-KW"/>
</dbReference>
<dbReference type="GO" id="GO:0007157">
    <property type="term" value="P:heterophilic cell-cell adhesion via plasma membrane cell adhesion molecules"/>
    <property type="evidence" value="ECO:0000318"/>
    <property type="project" value="GO_Central"/>
</dbReference>
<dbReference type="GO" id="GO:0007156">
    <property type="term" value="P:homophilic cell adhesion via plasma membrane adhesion molecules"/>
    <property type="evidence" value="ECO:0000318"/>
    <property type="project" value="GO_Central"/>
</dbReference>
<dbReference type="GO" id="GO:0009617">
    <property type="term" value="P:response to bacterium"/>
    <property type="evidence" value="ECO:0007669"/>
    <property type="project" value="Ensembl"/>
</dbReference>
<dbReference type="GO" id="GO:0007601">
    <property type="term" value="P:visual perception"/>
    <property type="evidence" value="ECO:0007669"/>
    <property type="project" value="UniProtKB-KW"/>
</dbReference>
<dbReference type="CDD" id="cd00054">
    <property type="entry name" value="EGF_CA"/>
    <property type="match status" value="8"/>
</dbReference>
<dbReference type="CDD" id="cd00096">
    <property type="entry name" value="Ig"/>
    <property type="match status" value="8"/>
</dbReference>
<dbReference type="CDD" id="cd00255">
    <property type="entry name" value="nidG2"/>
    <property type="match status" value="1"/>
</dbReference>
<dbReference type="CDD" id="cd00198">
    <property type="entry name" value="vWFA"/>
    <property type="match status" value="1"/>
</dbReference>
<dbReference type="FunFam" id="2.10.25.10:FF:000210">
    <property type="entry name" value="Hemicentin 1"/>
    <property type="match status" value="1"/>
</dbReference>
<dbReference type="FunFam" id="2.10.25.10:FF:000238">
    <property type="entry name" value="Hemicentin 1"/>
    <property type="match status" value="1"/>
</dbReference>
<dbReference type="FunFam" id="2.10.25.10:FF:000352">
    <property type="entry name" value="Hemicentin 1"/>
    <property type="match status" value="1"/>
</dbReference>
<dbReference type="FunFam" id="2.10.25.10:FF:000371">
    <property type="entry name" value="Hemicentin 1"/>
    <property type="match status" value="1"/>
</dbReference>
<dbReference type="FunFam" id="2.10.25.10:FF:000383">
    <property type="entry name" value="Hemicentin 1"/>
    <property type="match status" value="1"/>
</dbReference>
<dbReference type="FunFam" id="2.10.25.10:FF:000385">
    <property type="entry name" value="Hemicentin 1"/>
    <property type="match status" value="1"/>
</dbReference>
<dbReference type="FunFam" id="2.20.100.10:FF:000067">
    <property type="entry name" value="Hemicentin 1"/>
    <property type="match status" value="1"/>
</dbReference>
<dbReference type="FunFam" id="2.40.155.10:FF:000002">
    <property type="entry name" value="Hemicentin 1"/>
    <property type="match status" value="1"/>
</dbReference>
<dbReference type="FunFam" id="2.60.40.10:FF:000130">
    <property type="entry name" value="Hemicentin 1"/>
    <property type="match status" value="6"/>
</dbReference>
<dbReference type="FunFam" id="2.60.40.10:FF:000186">
    <property type="entry name" value="Hemicentin 1"/>
    <property type="match status" value="5"/>
</dbReference>
<dbReference type="FunFam" id="2.60.40.10:FF:000279">
    <property type="entry name" value="Hemicentin 1"/>
    <property type="match status" value="3"/>
</dbReference>
<dbReference type="FunFam" id="2.60.40.10:FF:000285">
    <property type="entry name" value="Hemicentin 1"/>
    <property type="match status" value="3"/>
</dbReference>
<dbReference type="FunFam" id="2.60.40.10:FF:000503">
    <property type="entry name" value="Hemicentin 1"/>
    <property type="match status" value="1"/>
</dbReference>
<dbReference type="FunFam" id="2.60.40.10:FF:000594">
    <property type="entry name" value="Hemicentin 1"/>
    <property type="match status" value="1"/>
</dbReference>
<dbReference type="FunFam" id="2.60.40.10:FF:000675">
    <property type="entry name" value="Hemicentin 1"/>
    <property type="match status" value="1"/>
</dbReference>
<dbReference type="FunFam" id="2.60.40.10:FF:000699">
    <property type="entry name" value="Hemicentin 1"/>
    <property type="match status" value="1"/>
</dbReference>
<dbReference type="FunFam" id="2.60.40.10:FF:000706">
    <property type="entry name" value="Hemicentin 1"/>
    <property type="match status" value="1"/>
</dbReference>
<dbReference type="FunFam" id="2.60.40.10:FF:000708">
    <property type="entry name" value="Hemicentin 1"/>
    <property type="match status" value="1"/>
</dbReference>
<dbReference type="FunFam" id="2.60.40.10:FF:000726">
    <property type="entry name" value="Hemicentin 1"/>
    <property type="match status" value="1"/>
</dbReference>
<dbReference type="FunFam" id="2.60.40.10:FF:000739">
    <property type="entry name" value="Hemicentin 1"/>
    <property type="match status" value="1"/>
</dbReference>
<dbReference type="FunFam" id="2.60.40.10:FF:000749">
    <property type="entry name" value="Hemicentin 1"/>
    <property type="match status" value="1"/>
</dbReference>
<dbReference type="FunFam" id="2.60.40.10:FF:000750">
    <property type="entry name" value="Hemicentin 1"/>
    <property type="match status" value="1"/>
</dbReference>
<dbReference type="FunFam" id="2.60.40.10:FF:000795">
    <property type="entry name" value="Hemicentin 1"/>
    <property type="match status" value="1"/>
</dbReference>
<dbReference type="FunFam" id="2.60.40.10:FF:000824">
    <property type="entry name" value="Hemicentin 1"/>
    <property type="match status" value="1"/>
</dbReference>
<dbReference type="FunFam" id="2.60.40.10:FF:000847">
    <property type="entry name" value="Hemicentin 1"/>
    <property type="match status" value="1"/>
</dbReference>
<dbReference type="FunFam" id="2.60.40.10:FF:000848">
    <property type="entry name" value="Hemicentin 1"/>
    <property type="match status" value="1"/>
</dbReference>
<dbReference type="FunFam" id="2.60.40.10:FF:000890">
    <property type="entry name" value="Hemicentin 1"/>
    <property type="match status" value="1"/>
</dbReference>
<dbReference type="FunFam" id="2.60.40.10:FF:000973">
    <property type="entry name" value="Hemicentin 1"/>
    <property type="match status" value="1"/>
</dbReference>
<dbReference type="FunFam" id="2.60.40.10:FF:000990">
    <property type="entry name" value="Hemicentin 1"/>
    <property type="match status" value="1"/>
</dbReference>
<dbReference type="FunFam" id="2.60.40.10:FF:001020">
    <property type="entry name" value="Hemicentin 1"/>
    <property type="match status" value="1"/>
</dbReference>
<dbReference type="FunFam" id="2.60.40.10:FF:001021">
    <property type="entry name" value="Hemicentin 1"/>
    <property type="match status" value="1"/>
</dbReference>
<dbReference type="FunFam" id="2.60.40.10:FF:001075">
    <property type="entry name" value="Hemicentin 1"/>
    <property type="match status" value="1"/>
</dbReference>
<dbReference type="FunFam" id="2.60.40.10:FF:001131">
    <property type="entry name" value="Hemicentin 1"/>
    <property type="match status" value="1"/>
</dbReference>
<dbReference type="FunFam" id="2.60.40.10:FF:001133">
    <property type="entry name" value="Hemicentin 1"/>
    <property type="match status" value="1"/>
</dbReference>
<dbReference type="FunFam" id="2.60.40.10:FF:001139">
    <property type="entry name" value="Hemicentin 1"/>
    <property type="match status" value="1"/>
</dbReference>
<dbReference type="FunFam" id="2.60.40.10:FF:001252">
    <property type="entry name" value="Hemicentin 1"/>
    <property type="match status" value="1"/>
</dbReference>
<dbReference type="FunFam" id="2.60.40.10:FF:001313">
    <property type="entry name" value="Hemicentin 1"/>
    <property type="match status" value="1"/>
</dbReference>
<dbReference type="FunFam" id="2.60.40.10:FF:001315">
    <property type="entry name" value="Hemicentin 1"/>
    <property type="match status" value="1"/>
</dbReference>
<dbReference type="FunFam" id="2.60.40.10:FF:001527">
    <property type="entry name" value="Hemicentin 1"/>
    <property type="match status" value="1"/>
</dbReference>
<dbReference type="FunFam" id="3.40.50.410:FF:000032">
    <property type="entry name" value="Hemicentin 1"/>
    <property type="match status" value="1"/>
</dbReference>
<dbReference type="FunFam" id="2.10.25.10:FF:000010">
    <property type="entry name" value="Pro-epidermal growth factor"/>
    <property type="match status" value="1"/>
</dbReference>
<dbReference type="FunFam" id="2.10.25.10:FF:000008">
    <property type="entry name" value="Signal peptide, CUB domain, EGF-like 2"/>
    <property type="match status" value="1"/>
</dbReference>
<dbReference type="FunFam" id="2.20.100.10:FF:000007">
    <property type="entry name" value="Thrombospondin 1"/>
    <property type="match status" value="4"/>
</dbReference>
<dbReference type="FunFam" id="2.20.100.10:FF:000002">
    <property type="entry name" value="Unc-5 netrin receptor C"/>
    <property type="match status" value="1"/>
</dbReference>
<dbReference type="Gene3D" id="2.40.155.10">
    <property type="entry name" value="Green fluorescent protein"/>
    <property type="match status" value="1"/>
</dbReference>
<dbReference type="Gene3D" id="2.60.40.10">
    <property type="entry name" value="Immunoglobulins"/>
    <property type="match status" value="44"/>
</dbReference>
<dbReference type="Gene3D" id="2.10.25.10">
    <property type="entry name" value="Laminin"/>
    <property type="match status" value="8"/>
</dbReference>
<dbReference type="Gene3D" id="2.20.100.10">
    <property type="entry name" value="Thrombospondin type-1 (TSP1) repeat"/>
    <property type="match status" value="6"/>
</dbReference>
<dbReference type="Gene3D" id="3.40.50.410">
    <property type="entry name" value="von Willebrand factor, type A domain"/>
    <property type="match status" value="1"/>
</dbReference>
<dbReference type="InterPro" id="IPR026823">
    <property type="entry name" value="cEGF"/>
</dbReference>
<dbReference type="InterPro" id="IPR050958">
    <property type="entry name" value="Cell_Adh-Cytoskel_Orgn"/>
</dbReference>
<dbReference type="InterPro" id="IPR001881">
    <property type="entry name" value="EGF-like_Ca-bd_dom"/>
</dbReference>
<dbReference type="InterPro" id="IPR000742">
    <property type="entry name" value="EGF-like_dom"/>
</dbReference>
<dbReference type="InterPro" id="IPR000152">
    <property type="entry name" value="EGF-type_Asp/Asn_hydroxyl_site"/>
</dbReference>
<dbReference type="InterPro" id="IPR018097">
    <property type="entry name" value="EGF_Ca-bd_CS"/>
</dbReference>
<dbReference type="InterPro" id="IPR006605">
    <property type="entry name" value="G2_nidogen/fibulin_G2F"/>
</dbReference>
<dbReference type="InterPro" id="IPR056475">
    <property type="entry name" value="GBD_Hemicentin/VWA7"/>
</dbReference>
<dbReference type="InterPro" id="IPR009017">
    <property type="entry name" value="GFP"/>
</dbReference>
<dbReference type="InterPro" id="IPR009030">
    <property type="entry name" value="Growth_fac_rcpt_cys_sf"/>
</dbReference>
<dbReference type="InterPro" id="IPR056861">
    <property type="entry name" value="HMCN1-like_VWA"/>
</dbReference>
<dbReference type="InterPro" id="IPR007110">
    <property type="entry name" value="Ig-like_dom"/>
</dbReference>
<dbReference type="InterPro" id="IPR036179">
    <property type="entry name" value="Ig-like_dom_sf"/>
</dbReference>
<dbReference type="InterPro" id="IPR013783">
    <property type="entry name" value="Ig-like_fold"/>
</dbReference>
<dbReference type="InterPro" id="IPR013098">
    <property type="entry name" value="Ig_I-set"/>
</dbReference>
<dbReference type="InterPro" id="IPR003599">
    <property type="entry name" value="Ig_sub"/>
</dbReference>
<dbReference type="InterPro" id="IPR003598">
    <property type="entry name" value="Ig_sub2"/>
</dbReference>
<dbReference type="InterPro" id="IPR013106">
    <property type="entry name" value="Ig_V-set"/>
</dbReference>
<dbReference type="InterPro" id="IPR049883">
    <property type="entry name" value="NOTCH1_EGF-like"/>
</dbReference>
<dbReference type="InterPro" id="IPR000884">
    <property type="entry name" value="TSP1_rpt"/>
</dbReference>
<dbReference type="InterPro" id="IPR036383">
    <property type="entry name" value="TSP1_rpt_sf"/>
</dbReference>
<dbReference type="InterPro" id="IPR036465">
    <property type="entry name" value="vWFA_dom_sf"/>
</dbReference>
<dbReference type="PANTHER" id="PTHR45080">
    <property type="entry name" value="CONTACTIN 5"/>
    <property type="match status" value="1"/>
</dbReference>
<dbReference type="PANTHER" id="PTHR45080:SF28">
    <property type="entry name" value="HEMICENTIN-2"/>
    <property type="match status" value="1"/>
</dbReference>
<dbReference type="Pfam" id="PF12662">
    <property type="entry name" value="cEGF"/>
    <property type="match status" value="1"/>
</dbReference>
<dbReference type="Pfam" id="PF07645">
    <property type="entry name" value="EGF_CA"/>
    <property type="match status" value="6"/>
</dbReference>
<dbReference type="Pfam" id="PF07474">
    <property type="entry name" value="G2F"/>
    <property type="match status" value="1"/>
</dbReference>
<dbReference type="Pfam" id="PF23560">
    <property type="entry name" value="GBD_Hemicentin"/>
    <property type="match status" value="1"/>
</dbReference>
<dbReference type="Pfam" id="PF07679">
    <property type="entry name" value="I-set"/>
    <property type="match status" value="35"/>
</dbReference>
<dbReference type="Pfam" id="PF13927">
    <property type="entry name" value="Ig_3"/>
    <property type="match status" value="8"/>
</dbReference>
<dbReference type="Pfam" id="PF00090">
    <property type="entry name" value="TSP_1"/>
    <property type="match status" value="6"/>
</dbReference>
<dbReference type="Pfam" id="PF25106">
    <property type="entry name" value="VWA_4"/>
    <property type="match status" value="1"/>
</dbReference>
<dbReference type="SMART" id="SM00181">
    <property type="entry name" value="EGF"/>
    <property type="match status" value="8"/>
</dbReference>
<dbReference type="SMART" id="SM00179">
    <property type="entry name" value="EGF_CA"/>
    <property type="match status" value="8"/>
</dbReference>
<dbReference type="SMART" id="SM00682">
    <property type="entry name" value="G2F"/>
    <property type="match status" value="1"/>
</dbReference>
<dbReference type="SMART" id="SM00409">
    <property type="entry name" value="IG"/>
    <property type="match status" value="44"/>
</dbReference>
<dbReference type="SMART" id="SM00408">
    <property type="entry name" value="IGc2"/>
    <property type="match status" value="44"/>
</dbReference>
<dbReference type="SMART" id="SM00406">
    <property type="entry name" value="IGv"/>
    <property type="match status" value="15"/>
</dbReference>
<dbReference type="SMART" id="SM00209">
    <property type="entry name" value="TSP1"/>
    <property type="match status" value="6"/>
</dbReference>
<dbReference type="SUPFAM" id="SSF54511">
    <property type="entry name" value="GFP-like"/>
    <property type="match status" value="1"/>
</dbReference>
<dbReference type="SUPFAM" id="SSF57184">
    <property type="entry name" value="Growth factor receptor domain"/>
    <property type="match status" value="3"/>
</dbReference>
<dbReference type="SUPFAM" id="SSF48726">
    <property type="entry name" value="Immunoglobulin"/>
    <property type="match status" value="44"/>
</dbReference>
<dbReference type="SUPFAM" id="SSF82895">
    <property type="entry name" value="TSP-1 type 1 repeat"/>
    <property type="match status" value="6"/>
</dbReference>
<dbReference type="SUPFAM" id="SSF53300">
    <property type="entry name" value="vWA-like"/>
    <property type="match status" value="1"/>
</dbReference>
<dbReference type="PROSITE" id="PS00010">
    <property type="entry name" value="ASX_HYDROXYL"/>
    <property type="match status" value="5"/>
</dbReference>
<dbReference type="PROSITE" id="PS01186">
    <property type="entry name" value="EGF_2"/>
    <property type="match status" value="3"/>
</dbReference>
<dbReference type="PROSITE" id="PS50026">
    <property type="entry name" value="EGF_3"/>
    <property type="match status" value="5"/>
</dbReference>
<dbReference type="PROSITE" id="PS01187">
    <property type="entry name" value="EGF_CA"/>
    <property type="match status" value="8"/>
</dbReference>
<dbReference type="PROSITE" id="PS50835">
    <property type="entry name" value="IG_LIKE"/>
    <property type="match status" value="44"/>
</dbReference>
<dbReference type="PROSITE" id="PS50993">
    <property type="entry name" value="NIDOGEN_G2"/>
    <property type="match status" value="1"/>
</dbReference>
<dbReference type="PROSITE" id="PS50092">
    <property type="entry name" value="TSP1"/>
    <property type="match status" value="6"/>
</dbReference>
<organism>
    <name type="scientific">Homo sapiens</name>
    <name type="common">Human</name>
    <dbReference type="NCBI Taxonomy" id="9606"/>
    <lineage>
        <taxon>Eukaryota</taxon>
        <taxon>Metazoa</taxon>
        <taxon>Chordata</taxon>
        <taxon>Craniata</taxon>
        <taxon>Vertebrata</taxon>
        <taxon>Euteleostomi</taxon>
        <taxon>Mammalia</taxon>
        <taxon>Eutheria</taxon>
        <taxon>Euarchontoglires</taxon>
        <taxon>Primates</taxon>
        <taxon>Haplorrhini</taxon>
        <taxon>Catarrhini</taxon>
        <taxon>Hominidae</taxon>
        <taxon>Homo</taxon>
    </lineage>
</organism>
<evidence type="ECO:0000250" key="1"/>
<evidence type="ECO:0000250" key="2">
    <source>
        <dbReference type="UniProtKB" id="D3YXG0"/>
    </source>
</evidence>
<evidence type="ECO:0000255" key="3"/>
<evidence type="ECO:0000255" key="4">
    <source>
        <dbReference type="PROSITE-ProRule" id="PRU00076"/>
    </source>
</evidence>
<evidence type="ECO:0000255" key="5">
    <source>
        <dbReference type="PROSITE-ProRule" id="PRU00210"/>
    </source>
</evidence>
<evidence type="ECO:0000255" key="6">
    <source>
        <dbReference type="PROSITE-ProRule" id="PRU00348"/>
    </source>
</evidence>
<evidence type="ECO:0000269" key="7">
    <source>
    </source>
</evidence>
<evidence type="ECO:0000269" key="8">
    <source>
    </source>
</evidence>
<evidence type="ECO:0000269" key="9">
    <source>
    </source>
</evidence>
<evidence type="ECO:0000269" key="10">
    <source ref="1"/>
</evidence>
<evidence type="ECO:0000303" key="11">
    <source>
    </source>
</evidence>
<evidence type="ECO:0000305" key="12"/>